<protein>
    <recommendedName>
        <fullName evidence="1">Porphobilinogen deaminase</fullName>
        <shortName evidence="1">PBG</shortName>
        <ecNumber evidence="1">2.5.1.61</ecNumber>
    </recommendedName>
    <alternativeName>
        <fullName evidence="1">Hydroxymethylbilane synthase</fullName>
        <shortName evidence="1">HMBS</shortName>
    </alternativeName>
    <alternativeName>
        <fullName evidence="1">Pre-uroporphyrinogen synthase</fullName>
    </alternativeName>
</protein>
<comment type="function">
    <text evidence="1">Tetrapolymerization of the monopyrrole PBG into the hydroxymethylbilane pre-uroporphyrinogen in several discrete steps.</text>
</comment>
<comment type="catalytic activity">
    <reaction evidence="1">
        <text>4 porphobilinogen + H2O = hydroxymethylbilane + 4 NH4(+)</text>
        <dbReference type="Rhea" id="RHEA:13185"/>
        <dbReference type="ChEBI" id="CHEBI:15377"/>
        <dbReference type="ChEBI" id="CHEBI:28938"/>
        <dbReference type="ChEBI" id="CHEBI:57845"/>
        <dbReference type="ChEBI" id="CHEBI:58126"/>
        <dbReference type="EC" id="2.5.1.61"/>
    </reaction>
</comment>
<comment type="cofactor">
    <cofactor evidence="1">
        <name>dipyrromethane</name>
        <dbReference type="ChEBI" id="CHEBI:60342"/>
    </cofactor>
    <text evidence="1">Binds 1 dipyrromethane group covalently.</text>
</comment>
<comment type="pathway">
    <text evidence="1">Porphyrin-containing compound metabolism; protoporphyrin-IX biosynthesis; coproporphyrinogen-III from 5-aminolevulinate: step 2/4.</text>
</comment>
<comment type="subunit">
    <text evidence="1">Monomer.</text>
</comment>
<comment type="miscellaneous">
    <text evidence="1">The porphobilinogen subunits are added to the dipyrromethane group.</text>
</comment>
<comment type="similarity">
    <text evidence="1">Belongs to the HMBS family.</text>
</comment>
<dbReference type="EC" id="2.5.1.61" evidence="1"/>
<dbReference type="EMBL" id="CP000747">
    <property type="protein sequence ID" value="ACG79814.1"/>
    <property type="molecule type" value="Genomic_DNA"/>
</dbReference>
<dbReference type="RefSeq" id="WP_012523952.1">
    <property type="nucleotide sequence ID" value="NC_011144.1"/>
</dbReference>
<dbReference type="SMR" id="B4RC21"/>
<dbReference type="STRING" id="450851.PHZ_c3405"/>
<dbReference type="KEGG" id="pzu:PHZ_c3405"/>
<dbReference type="eggNOG" id="COG0181">
    <property type="taxonomic scope" value="Bacteria"/>
</dbReference>
<dbReference type="HOGENOM" id="CLU_019704_0_2_5"/>
<dbReference type="OrthoDB" id="9810298at2"/>
<dbReference type="UniPathway" id="UPA00251">
    <property type="reaction ID" value="UER00319"/>
</dbReference>
<dbReference type="Proteomes" id="UP000001868">
    <property type="component" value="Chromosome"/>
</dbReference>
<dbReference type="GO" id="GO:0005737">
    <property type="term" value="C:cytoplasm"/>
    <property type="evidence" value="ECO:0007669"/>
    <property type="project" value="TreeGrafter"/>
</dbReference>
<dbReference type="GO" id="GO:0004418">
    <property type="term" value="F:hydroxymethylbilane synthase activity"/>
    <property type="evidence" value="ECO:0007669"/>
    <property type="project" value="UniProtKB-UniRule"/>
</dbReference>
<dbReference type="GO" id="GO:0006782">
    <property type="term" value="P:protoporphyrinogen IX biosynthetic process"/>
    <property type="evidence" value="ECO:0007669"/>
    <property type="project" value="UniProtKB-UniRule"/>
</dbReference>
<dbReference type="FunFam" id="3.40.190.10:FF:000005">
    <property type="entry name" value="Porphobilinogen deaminase"/>
    <property type="match status" value="1"/>
</dbReference>
<dbReference type="Gene3D" id="3.40.190.10">
    <property type="entry name" value="Periplasmic binding protein-like II"/>
    <property type="match status" value="2"/>
</dbReference>
<dbReference type="Gene3D" id="3.30.160.40">
    <property type="entry name" value="Porphobilinogen deaminase, C-terminal domain"/>
    <property type="match status" value="1"/>
</dbReference>
<dbReference type="HAMAP" id="MF_00260">
    <property type="entry name" value="Porphobil_deam"/>
    <property type="match status" value="1"/>
</dbReference>
<dbReference type="InterPro" id="IPR000860">
    <property type="entry name" value="HemC"/>
</dbReference>
<dbReference type="InterPro" id="IPR022419">
    <property type="entry name" value="Porphobilin_deaminase_cofac_BS"/>
</dbReference>
<dbReference type="InterPro" id="IPR022417">
    <property type="entry name" value="Porphobilin_deaminase_N"/>
</dbReference>
<dbReference type="InterPro" id="IPR022418">
    <property type="entry name" value="Porphobilinogen_deaminase_C"/>
</dbReference>
<dbReference type="InterPro" id="IPR036803">
    <property type="entry name" value="Porphobilinogen_deaminase_C_sf"/>
</dbReference>
<dbReference type="NCBIfam" id="TIGR00212">
    <property type="entry name" value="hemC"/>
    <property type="match status" value="1"/>
</dbReference>
<dbReference type="PANTHER" id="PTHR11557">
    <property type="entry name" value="PORPHOBILINOGEN DEAMINASE"/>
    <property type="match status" value="1"/>
</dbReference>
<dbReference type="PANTHER" id="PTHR11557:SF0">
    <property type="entry name" value="PORPHOBILINOGEN DEAMINASE"/>
    <property type="match status" value="1"/>
</dbReference>
<dbReference type="Pfam" id="PF01379">
    <property type="entry name" value="Porphobil_deam"/>
    <property type="match status" value="1"/>
</dbReference>
<dbReference type="Pfam" id="PF03900">
    <property type="entry name" value="Porphobil_deamC"/>
    <property type="match status" value="1"/>
</dbReference>
<dbReference type="PIRSF" id="PIRSF001438">
    <property type="entry name" value="4pyrrol_synth_OHMeBilane_synth"/>
    <property type="match status" value="1"/>
</dbReference>
<dbReference type="PRINTS" id="PR00151">
    <property type="entry name" value="PORPHBDMNASE"/>
</dbReference>
<dbReference type="SUPFAM" id="SSF53850">
    <property type="entry name" value="Periplasmic binding protein-like II"/>
    <property type="match status" value="1"/>
</dbReference>
<dbReference type="SUPFAM" id="SSF54782">
    <property type="entry name" value="Porphobilinogen deaminase (hydroxymethylbilane synthase), C-terminal domain"/>
    <property type="match status" value="1"/>
</dbReference>
<dbReference type="PROSITE" id="PS00533">
    <property type="entry name" value="PORPHOBILINOGEN_DEAM"/>
    <property type="match status" value="1"/>
</dbReference>
<organism>
    <name type="scientific">Phenylobacterium zucineum (strain HLK1)</name>
    <dbReference type="NCBI Taxonomy" id="450851"/>
    <lineage>
        <taxon>Bacteria</taxon>
        <taxon>Pseudomonadati</taxon>
        <taxon>Pseudomonadota</taxon>
        <taxon>Alphaproteobacteria</taxon>
        <taxon>Caulobacterales</taxon>
        <taxon>Caulobacteraceae</taxon>
        <taxon>Phenylobacterium</taxon>
    </lineage>
</organism>
<keyword id="KW-0627">Porphyrin biosynthesis</keyword>
<keyword id="KW-1185">Reference proteome</keyword>
<keyword id="KW-0808">Transferase</keyword>
<feature type="chain" id="PRO_1000114169" description="Porphobilinogen deaminase">
    <location>
        <begin position="1"/>
        <end position="320"/>
    </location>
</feature>
<feature type="modified residue" description="S-(dipyrrolylmethanemethyl)cysteine" evidence="1">
    <location>
        <position position="251"/>
    </location>
</feature>
<evidence type="ECO:0000255" key="1">
    <source>
        <dbReference type="HAMAP-Rule" id="MF_00260"/>
    </source>
</evidence>
<accession>B4RC21</accession>
<sequence>MPTQPVVRIGARGSKLSLTQSGIVQRRIAAALGVDPDNAAEVERVAPLIPITTTGDRVQDRRLLEIGGKGLFTKEIEEALMDGRIDCAVHSMKDMPAELPEGLCIAAIPEREDPRDAFISRGPERLEDLTEGAILGTASLRRQAQCLHRRPDLEAKLLRGNVETRLGKLEAGEYDAILLAYSGLRRLGLGHLPKSLIDPKEAPPAPGQGALAVETRAADRDLPWAQALRCRPTTLAVAAERGALIALEGSCRTPIGAHAWLEGGTCKLIVEALSPDGKLRFRHSGEAELSQMADPEASARDLGLSLGLAVKEEAGDAIVL</sequence>
<gene>
    <name evidence="1" type="primary">hemC</name>
    <name type="ordered locus">PHZ_c3405</name>
</gene>
<name>HEM3_PHEZH</name>
<proteinExistence type="inferred from homology"/>
<reference key="1">
    <citation type="journal article" date="2008" name="BMC Genomics">
        <title>Complete genome of Phenylobacterium zucineum - a novel facultative intracellular bacterium isolated from human erythroleukemia cell line K562.</title>
        <authorList>
            <person name="Luo Y."/>
            <person name="Xu X."/>
            <person name="Ding Z."/>
            <person name="Liu Z."/>
            <person name="Zhang B."/>
            <person name="Yan Z."/>
            <person name="Sun J."/>
            <person name="Hu S."/>
            <person name="Hu X."/>
        </authorList>
    </citation>
    <scope>NUCLEOTIDE SEQUENCE [LARGE SCALE GENOMIC DNA]</scope>
    <source>
        <strain>HLK1</strain>
    </source>
</reference>